<keyword id="KW-0131">Cell cycle</keyword>
<keyword id="KW-0132">Cell division</keyword>
<keyword id="KW-0133">Cell shape</keyword>
<keyword id="KW-0961">Cell wall biogenesis/degradation</keyword>
<keyword id="KW-0963">Cytoplasm</keyword>
<keyword id="KW-0573">Peptidoglycan synthesis</keyword>
<keyword id="KW-0808">Transferase</keyword>
<feature type="chain" id="PRO_0000178897" description="UDP-N-acetylglucosamine 1-carboxyvinyltransferase">
    <location>
        <begin position="1" status="less than"/>
        <end position="104"/>
    </location>
</feature>
<feature type="binding site" evidence="2">
    <location>
        <position position="13"/>
    </location>
    <ligand>
        <name>UDP-N-acetyl-alpha-D-glucosamine</name>
        <dbReference type="ChEBI" id="CHEBI:57705"/>
    </ligand>
</feature>
<feature type="non-terminal residue">
    <location>
        <position position="1"/>
    </location>
</feature>
<evidence type="ECO:0000250" key="1"/>
<evidence type="ECO:0000250" key="2">
    <source>
        <dbReference type="UniProtKB" id="P0A749"/>
    </source>
</evidence>
<evidence type="ECO:0000305" key="3"/>
<sequence>AIADGTSMITENVFEARFRFVEEMIRLGADARTDGHHAVVRGIPQLSSAPVWSSDIRAGAGLVLAGLVADGETEVHDVFHIDRGYPLFVENLVSLGAEIERVSS</sequence>
<accession>Q59561</accession>
<proteinExistence type="inferred from homology"/>
<comment type="function">
    <text evidence="1">Cell wall formation. Adds enolpyruvyl to UDP-N-acetylglucosamine (By similarity).</text>
</comment>
<comment type="catalytic activity">
    <reaction>
        <text>phosphoenolpyruvate + UDP-N-acetyl-alpha-D-glucosamine = UDP-N-acetyl-3-O-(1-carboxyvinyl)-alpha-D-glucosamine + phosphate</text>
        <dbReference type="Rhea" id="RHEA:18681"/>
        <dbReference type="ChEBI" id="CHEBI:43474"/>
        <dbReference type="ChEBI" id="CHEBI:57705"/>
        <dbReference type="ChEBI" id="CHEBI:58702"/>
        <dbReference type="ChEBI" id="CHEBI:68483"/>
        <dbReference type="EC" id="2.5.1.7"/>
    </reaction>
</comment>
<comment type="pathway">
    <text>Cell wall biogenesis; peptidoglycan biosynthesis.</text>
</comment>
<comment type="subcellular location">
    <subcellularLocation>
        <location evidence="1">Cytoplasm</location>
    </subcellularLocation>
</comment>
<comment type="similarity">
    <text evidence="3">Belongs to the EPSP synthase family. MurA subfamily.</text>
</comment>
<organism>
    <name type="scientific">Mycolicibacterium smegmatis</name>
    <name type="common">Mycobacterium smegmatis</name>
    <dbReference type="NCBI Taxonomy" id="1772"/>
    <lineage>
        <taxon>Bacteria</taxon>
        <taxon>Bacillati</taxon>
        <taxon>Actinomycetota</taxon>
        <taxon>Actinomycetes</taxon>
        <taxon>Mycobacteriales</taxon>
        <taxon>Mycobacteriaceae</taxon>
        <taxon>Mycolicibacterium</taxon>
    </lineage>
</organism>
<dbReference type="EC" id="2.5.1.7"/>
<dbReference type="EMBL" id="X87943">
    <property type="protein sequence ID" value="CAA61195.1"/>
    <property type="molecule type" value="Genomic_DNA"/>
</dbReference>
<dbReference type="PIR" id="S57429">
    <property type="entry name" value="S57429"/>
</dbReference>
<dbReference type="SMR" id="Q59561"/>
<dbReference type="eggNOG" id="COG0766">
    <property type="taxonomic scope" value="Bacteria"/>
</dbReference>
<dbReference type="UniPathway" id="UPA00219"/>
<dbReference type="GO" id="GO:0005737">
    <property type="term" value="C:cytoplasm"/>
    <property type="evidence" value="ECO:0007669"/>
    <property type="project" value="UniProtKB-SubCell"/>
</dbReference>
<dbReference type="GO" id="GO:0008760">
    <property type="term" value="F:UDP-N-acetylglucosamine 1-carboxyvinyltransferase activity"/>
    <property type="evidence" value="ECO:0007669"/>
    <property type="project" value="UniProtKB-EC"/>
</dbReference>
<dbReference type="GO" id="GO:0051301">
    <property type="term" value="P:cell division"/>
    <property type="evidence" value="ECO:0007669"/>
    <property type="project" value="UniProtKB-KW"/>
</dbReference>
<dbReference type="GO" id="GO:0071555">
    <property type="term" value="P:cell wall organization"/>
    <property type="evidence" value="ECO:0007669"/>
    <property type="project" value="UniProtKB-KW"/>
</dbReference>
<dbReference type="GO" id="GO:0009252">
    <property type="term" value="P:peptidoglycan biosynthetic process"/>
    <property type="evidence" value="ECO:0007669"/>
    <property type="project" value="UniProtKB-UniPathway"/>
</dbReference>
<dbReference type="GO" id="GO:0008360">
    <property type="term" value="P:regulation of cell shape"/>
    <property type="evidence" value="ECO:0007669"/>
    <property type="project" value="UniProtKB-KW"/>
</dbReference>
<dbReference type="Gene3D" id="3.65.10.10">
    <property type="entry name" value="Enolpyruvate transferase domain"/>
    <property type="match status" value="1"/>
</dbReference>
<dbReference type="InterPro" id="IPR001986">
    <property type="entry name" value="Enolpyruvate_Tfrase_dom"/>
</dbReference>
<dbReference type="InterPro" id="IPR036968">
    <property type="entry name" value="Enolpyruvate_Tfrase_sf"/>
</dbReference>
<dbReference type="InterPro" id="IPR050068">
    <property type="entry name" value="MurA_subfamily"/>
</dbReference>
<dbReference type="InterPro" id="IPR013792">
    <property type="entry name" value="RNA3'P_cycl/enolpyr_Trfase_a/b"/>
</dbReference>
<dbReference type="PANTHER" id="PTHR43783">
    <property type="entry name" value="UDP-N-ACETYLGLUCOSAMINE 1-CARBOXYVINYLTRANSFERASE"/>
    <property type="match status" value="1"/>
</dbReference>
<dbReference type="PANTHER" id="PTHR43783:SF1">
    <property type="entry name" value="UDP-N-ACETYLGLUCOSAMINE 1-CARBOXYVINYLTRANSFERASE"/>
    <property type="match status" value="1"/>
</dbReference>
<dbReference type="Pfam" id="PF00275">
    <property type="entry name" value="EPSP_synthase"/>
    <property type="match status" value="1"/>
</dbReference>
<dbReference type="SUPFAM" id="SSF55205">
    <property type="entry name" value="EPT/RTPC-like"/>
    <property type="match status" value="1"/>
</dbReference>
<gene>
    <name type="primary">murA</name>
</gene>
<protein>
    <recommendedName>
        <fullName>UDP-N-acetylglucosamine 1-carboxyvinyltransferase</fullName>
        <ecNumber>2.5.1.7</ecNumber>
    </recommendedName>
    <alternativeName>
        <fullName>Enoylpyruvate transferase</fullName>
    </alternativeName>
    <alternativeName>
        <fullName>UDP-N-acetylglucosamine enolpyruvyl transferase</fullName>
        <shortName>EPT</shortName>
    </alternativeName>
</protein>
<name>MURA_MYCSM</name>
<reference key="1">
    <citation type="journal article" date="1996" name="FEMS Microbiol. Lett.">
        <title>A novel method for the isolation of mycobacterial DNA.</title>
        <authorList>
            <person name="Gonzalez-y-Merchand J.A."/>
            <person name="Estrada-Garcia I."/>
            <person name="Colston M.J."/>
            <person name="Cox R.A."/>
        </authorList>
    </citation>
    <scope>NUCLEOTIDE SEQUENCE [GENOMIC DNA]</scope>
    <source>
        <strain>ATCC 19420 / DSM 43756 / JCM 5866 / KCTC 9108 / NCTC 8159 / NRRL B-14616 / Cornell 3</strain>
    </source>
</reference>